<feature type="initiator methionine" description="Removed" evidence="9">
    <location>
        <position position="1"/>
    </location>
</feature>
<feature type="chain" id="PRO_0000106363" description="General transcription factor 3C polypeptide 3">
    <location>
        <begin position="2"/>
        <end position="886"/>
    </location>
</feature>
<feature type="repeat" description="TPR 1">
    <location>
        <begin position="149"/>
        <end position="182"/>
    </location>
</feature>
<feature type="repeat" description="TPR 2">
    <location>
        <begin position="183"/>
        <end position="216"/>
    </location>
</feature>
<feature type="repeat" description="TPR 3">
    <location>
        <begin position="217"/>
        <end position="250"/>
    </location>
</feature>
<feature type="repeat" description="TPR 4">
    <location>
        <begin position="252"/>
        <end position="284"/>
    </location>
</feature>
<feature type="repeat" description="TPR 5">
    <location>
        <begin position="290"/>
        <end position="323"/>
    </location>
</feature>
<feature type="repeat" description="TPR 6">
    <location>
        <begin position="326"/>
        <end position="361"/>
    </location>
</feature>
<feature type="repeat" description="TPR 7">
    <location>
        <begin position="421"/>
        <end position="454"/>
    </location>
</feature>
<feature type="repeat" description="TPR 8">
    <location>
        <begin position="456"/>
        <end position="489"/>
    </location>
</feature>
<feature type="repeat" description="TPR 9">
    <location>
        <begin position="491"/>
        <end position="523"/>
    </location>
</feature>
<feature type="repeat" description="TPR 10">
    <location>
        <begin position="733"/>
        <end position="766"/>
    </location>
</feature>
<feature type="repeat" description="TPR 11">
    <location>
        <begin position="811"/>
        <end position="844"/>
    </location>
</feature>
<feature type="region of interest" description="Disordered" evidence="1">
    <location>
        <begin position="1"/>
        <end position="121"/>
    </location>
</feature>
<feature type="compositionally biased region" description="Basic and acidic residues" evidence="1">
    <location>
        <begin position="12"/>
        <end position="44"/>
    </location>
</feature>
<feature type="compositionally biased region" description="Polar residues" evidence="1">
    <location>
        <begin position="53"/>
        <end position="63"/>
    </location>
</feature>
<feature type="compositionally biased region" description="Acidic residues" evidence="1">
    <location>
        <begin position="92"/>
        <end position="113"/>
    </location>
</feature>
<feature type="modified residue" description="N-acetylserine" evidence="9">
    <location>
        <position position="2"/>
    </location>
</feature>
<feature type="modified residue" description="Phosphoserine" evidence="6 7 8 10">
    <location>
        <position position="43"/>
    </location>
</feature>
<feature type="modified residue" description="Phosphoserine" evidence="10">
    <location>
        <position position="282"/>
    </location>
</feature>
<feature type="splice variant" id="VSP_010353" description="In isoform 2." evidence="4">
    <original>PLLTTLV</original>
    <variation>VCNKICT</variation>
    <location>
        <begin position="407"/>
        <end position="413"/>
    </location>
</feature>
<feature type="splice variant" id="VSP_010354" description="In isoform 2." evidence="4">
    <location>
        <begin position="414"/>
        <end position="886"/>
    </location>
</feature>
<feature type="sequence variant" id="VAR_061902" description="In dbSNP:rs11559078." evidence="3">
    <original>N</original>
    <variation>S</variation>
    <location>
        <position position="70"/>
    </location>
</feature>
<feature type="sequence conflict" description="In Ref. 6; AAH15995." evidence="5" ref="6">
    <original>LV</original>
    <variation>HL</variation>
    <location>
        <begin position="412"/>
        <end position="413"/>
    </location>
</feature>
<feature type="sequence conflict" description="In Ref. 3; BAB15638." evidence="5" ref="3">
    <original>I</original>
    <variation>M</variation>
    <location>
        <position position="589"/>
    </location>
</feature>
<accession>Q9Y5Q9</accession>
<accession>Q4ZG48</accession>
<accession>Q86XJ8</accession>
<accession>Q8WX84</accession>
<accession>Q96B44</accession>
<accession>Q9H5I8</accession>
<accession>Q9NT97</accession>
<evidence type="ECO:0000256" key="1">
    <source>
        <dbReference type="SAM" id="MobiDB-lite"/>
    </source>
</evidence>
<evidence type="ECO:0000269" key="2">
    <source>
    </source>
</evidence>
<evidence type="ECO:0000269" key="3">
    <source>
    </source>
</evidence>
<evidence type="ECO:0000303" key="4">
    <source ref="2"/>
</evidence>
<evidence type="ECO:0000305" key="5"/>
<evidence type="ECO:0007744" key="6">
    <source>
    </source>
</evidence>
<evidence type="ECO:0007744" key="7">
    <source>
    </source>
</evidence>
<evidence type="ECO:0007744" key="8">
    <source>
    </source>
</evidence>
<evidence type="ECO:0007744" key="9">
    <source>
    </source>
</evidence>
<evidence type="ECO:0007744" key="10">
    <source>
    </source>
</evidence>
<dbReference type="EMBL" id="AF133123">
    <property type="protein sequence ID" value="AAD41475.1"/>
    <property type="molecule type" value="mRNA"/>
</dbReference>
<dbReference type="EMBL" id="AF465407">
    <property type="protein sequence ID" value="AAL73493.1"/>
    <property type="molecule type" value="mRNA"/>
</dbReference>
<dbReference type="EMBL" id="AK027050">
    <property type="protein sequence ID" value="BAB15638.1"/>
    <property type="status" value="ALT_INIT"/>
    <property type="molecule type" value="mRNA"/>
</dbReference>
<dbReference type="EMBL" id="AK314718">
    <property type="protein sequence ID" value="BAG37262.1"/>
    <property type="molecule type" value="mRNA"/>
</dbReference>
<dbReference type="EMBL" id="AC012486">
    <property type="protein sequence ID" value="AAX88853.1"/>
    <property type="molecule type" value="Genomic_DNA"/>
</dbReference>
<dbReference type="EMBL" id="CH471063">
    <property type="protein sequence ID" value="EAW70132.1"/>
    <property type="molecule type" value="Genomic_DNA"/>
</dbReference>
<dbReference type="EMBL" id="BC015995">
    <property type="protein sequence ID" value="AAH15995.1"/>
    <property type="molecule type" value="mRNA"/>
</dbReference>
<dbReference type="EMBL" id="BC043347">
    <property type="protein sequence ID" value="AAH43347.1"/>
    <property type="molecule type" value="mRNA"/>
</dbReference>
<dbReference type="EMBL" id="AL137453">
    <property type="protein sequence ID" value="CAB70745.1"/>
    <property type="molecule type" value="mRNA"/>
</dbReference>
<dbReference type="CCDS" id="CCDS2316.1">
    <molecule id="Q9Y5Q9-1"/>
</dbReference>
<dbReference type="CCDS" id="CCDS56153.1">
    <molecule id="Q9Y5Q9-2"/>
</dbReference>
<dbReference type="PIR" id="T46268">
    <property type="entry name" value="T46268"/>
</dbReference>
<dbReference type="RefSeq" id="NP_001193703.1">
    <molecule id="Q9Y5Q9-2"/>
    <property type="nucleotide sequence ID" value="NM_001206774.2"/>
</dbReference>
<dbReference type="RefSeq" id="NP_036218.1">
    <molecule id="Q9Y5Q9-1"/>
    <property type="nucleotide sequence ID" value="NM_012086.5"/>
</dbReference>
<dbReference type="PDB" id="8CLK">
    <property type="method" value="EM"/>
    <property type="resolution" value="3.50 A"/>
    <property type="chains" value="D=1-886"/>
</dbReference>
<dbReference type="PDBsum" id="8CLK"/>
<dbReference type="EMDB" id="EMD-16715"/>
<dbReference type="SMR" id="Q9Y5Q9"/>
<dbReference type="BioGRID" id="114739">
    <property type="interactions" value="234"/>
</dbReference>
<dbReference type="ComplexPortal" id="CPX-2373">
    <property type="entry name" value="General transcription factor TFIIIC complex"/>
</dbReference>
<dbReference type="CORUM" id="Q9Y5Q9"/>
<dbReference type="FunCoup" id="Q9Y5Q9">
    <property type="interactions" value="3961"/>
</dbReference>
<dbReference type="IntAct" id="Q9Y5Q9">
    <property type="interactions" value="178"/>
</dbReference>
<dbReference type="MINT" id="Q9Y5Q9"/>
<dbReference type="STRING" id="9606.ENSP00000263956"/>
<dbReference type="GlyGen" id="Q9Y5Q9">
    <property type="glycosylation" value="1 site, 1 O-linked glycan (1 site)"/>
</dbReference>
<dbReference type="iPTMnet" id="Q9Y5Q9"/>
<dbReference type="MetOSite" id="Q9Y5Q9"/>
<dbReference type="PhosphoSitePlus" id="Q9Y5Q9"/>
<dbReference type="SwissPalm" id="Q9Y5Q9"/>
<dbReference type="BioMuta" id="GTF3C3"/>
<dbReference type="DMDM" id="47606223"/>
<dbReference type="jPOST" id="Q9Y5Q9"/>
<dbReference type="MassIVE" id="Q9Y5Q9"/>
<dbReference type="PaxDb" id="9606-ENSP00000263956"/>
<dbReference type="PeptideAtlas" id="Q9Y5Q9"/>
<dbReference type="ProteomicsDB" id="86478">
    <molecule id="Q9Y5Q9-1"/>
</dbReference>
<dbReference type="ProteomicsDB" id="86479">
    <molecule id="Q9Y5Q9-2"/>
</dbReference>
<dbReference type="Pumba" id="Q9Y5Q9"/>
<dbReference type="Antibodypedia" id="19878">
    <property type="antibodies" value="252 antibodies from 27 providers"/>
</dbReference>
<dbReference type="DNASU" id="9330"/>
<dbReference type="Ensembl" id="ENST00000263956.8">
    <molecule id="Q9Y5Q9-1"/>
    <property type="protein sequence ID" value="ENSP00000263956.3"/>
    <property type="gene ID" value="ENSG00000119041.11"/>
</dbReference>
<dbReference type="Ensembl" id="ENST00000409364.3">
    <molecule id="Q9Y5Q9-2"/>
    <property type="protein sequence ID" value="ENSP00000386465.3"/>
    <property type="gene ID" value="ENSG00000119041.11"/>
</dbReference>
<dbReference type="GeneID" id="9330"/>
<dbReference type="KEGG" id="hsa:9330"/>
<dbReference type="MANE-Select" id="ENST00000263956.8">
    <property type="protein sequence ID" value="ENSP00000263956.3"/>
    <property type="RefSeq nucleotide sequence ID" value="NM_012086.5"/>
    <property type="RefSeq protein sequence ID" value="NP_036218.1"/>
</dbReference>
<dbReference type="UCSC" id="uc002uts.4">
    <molecule id="Q9Y5Q9-1"/>
    <property type="organism name" value="human"/>
</dbReference>
<dbReference type="AGR" id="HGNC:4666"/>
<dbReference type="CTD" id="9330"/>
<dbReference type="DisGeNET" id="9330"/>
<dbReference type="GeneCards" id="GTF3C3"/>
<dbReference type="HGNC" id="HGNC:4666">
    <property type="gene designation" value="GTF3C3"/>
</dbReference>
<dbReference type="HPA" id="ENSG00000119041">
    <property type="expression patterns" value="Low tissue specificity"/>
</dbReference>
<dbReference type="MIM" id="604888">
    <property type="type" value="gene"/>
</dbReference>
<dbReference type="neXtProt" id="NX_Q9Y5Q9"/>
<dbReference type="OpenTargets" id="ENSG00000119041"/>
<dbReference type="PharmGKB" id="PA29054"/>
<dbReference type="VEuPathDB" id="HostDB:ENSG00000119041"/>
<dbReference type="eggNOG" id="KOG2076">
    <property type="taxonomic scope" value="Eukaryota"/>
</dbReference>
<dbReference type="GeneTree" id="ENSGT00390000016929"/>
<dbReference type="HOGENOM" id="CLU_002391_1_1_1"/>
<dbReference type="InParanoid" id="Q9Y5Q9"/>
<dbReference type="OMA" id="SSPNMKF"/>
<dbReference type="OrthoDB" id="9991317at2759"/>
<dbReference type="PAN-GO" id="Q9Y5Q9">
    <property type="GO annotations" value="2 GO annotations based on evolutionary models"/>
</dbReference>
<dbReference type="PhylomeDB" id="Q9Y5Q9"/>
<dbReference type="TreeFam" id="TF105955"/>
<dbReference type="PathwayCommons" id="Q9Y5Q9"/>
<dbReference type="Reactome" id="R-HSA-749476">
    <property type="pathway name" value="RNA Polymerase III Abortive And Retractive Initiation"/>
</dbReference>
<dbReference type="Reactome" id="R-HSA-76061">
    <property type="pathway name" value="RNA Polymerase III Transcription Initiation From Type 1 Promoter"/>
</dbReference>
<dbReference type="Reactome" id="R-HSA-76066">
    <property type="pathway name" value="RNA Polymerase III Transcription Initiation From Type 2 Promoter"/>
</dbReference>
<dbReference type="SignaLink" id="Q9Y5Q9"/>
<dbReference type="SIGNOR" id="Q9Y5Q9"/>
<dbReference type="BioGRID-ORCS" id="9330">
    <property type="hits" value="427 hits in 1169 CRISPR screens"/>
</dbReference>
<dbReference type="ChiTaRS" id="GTF3C3">
    <property type="organism name" value="human"/>
</dbReference>
<dbReference type="GenomeRNAi" id="9330"/>
<dbReference type="Pharos" id="Q9Y5Q9">
    <property type="development level" value="Tdark"/>
</dbReference>
<dbReference type="PRO" id="PR:Q9Y5Q9"/>
<dbReference type="Proteomes" id="UP000005640">
    <property type="component" value="Chromosome 2"/>
</dbReference>
<dbReference type="RNAct" id="Q9Y5Q9">
    <property type="molecule type" value="protein"/>
</dbReference>
<dbReference type="Bgee" id="ENSG00000119041">
    <property type="expression patterns" value="Expressed in calcaneal tendon and 190 other cell types or tissues"/>
</dbReference>
<dbReference type="ExpressionAtlas" id="Q9Y5Q9">
    <property type="expression patterns" value="baseline and differential"/>
</dbReference>
<dbReference type="GO" id="GO:0001650">
    <property type="term" value="C:fibrillar center"/>
    <property type="evidence" value="ECO:0000314"/>
    <property type="project" value="HPA"/>
</dbReference>
<dbReference type="GO" id="GO:0031965">
    <property type="term" value="C:nuclear membrane"/>
    <property type="evidence" value="ECO:0000314"/>
    <property type="project" value="HPA"/>
</dbReference>
<dbReference type="GO" id="GO:0005654">
    <property type="term" value="C:nucleoplasm"/>
    <property type="evidence" value="ECO:0000314"/>
    <property type="project" value="HPA"/>
</dbReference>
<dbReference type="GO" id="GO:0000127">
    <property type="term" value="C:transcription factor TFIIIC complex"/>
    <property type="evidence" value="ECO:0000314"/>
    <property type="project" value="HGNC-UCL"/>
</dbReference>
<dbReference type="GO" id="GO:0003677">
    <property type="term" value="F:DNA binding"/>
    <property type="evidence" value="ECO:0007669"/>
    <property type="project" value="UniProtKB-KW"/>
</dbReference>
<dbReference type="GO" id="GO:0000995">
    <property type="term" value="F:RNA polymerase III general transcription initiation factor activity"/>
    <property type="evidence" value="ECO:0000314"/>
    <property type="project" value="GO_Central"/>
</dbReference>
<dbReference type="GO" id="GO:0042791">
    <property type="term" value="P:5S class rRNA transcription by RNA polymerase III"/>
    <property type="evidence" value="ECO:0000305"/>
    <property type="project" value="HGNC-UCL"/>
</dbReference>
<dbReference type="GO" id="GO:0006383">
    <property type="term" value="P:transcription by RNA polymerase III"/>
    <property type="evidence" value="ECO:0000318"/>
    <property type="project" value="GO_Central"/>
</dbReference>
<dbReference type="GO" id="GO:0042797">
    <property type="term" value="P:tRNA transcription by RNA polymerase III"/>
    <property type="evidence" value="ECO:0000305"/>
    <property type="project" value="HGNC-UCL"/>
</dbReference>
<dbReference type="FunFam" id="1.25.40.10:FF:000116">
    <property type="entry name" value="General transcription factor 3C polypeptide 3"/>
    <property type="match status" value="1"/>
</dbReference>
<dbReference type="FunFam" id="1.25.40.10:FF:000155">
    <property type="entry name" value="General transcription factor 3C polypeptide 3"/>
    <property type="match status" value="1"/>
</dbReference>
<dbReference type="FunFam" id="1.25.40.10:FF:000128">
    <property type="entry name" value="General transcription factor IIIC, polypeptide 3, 102kDa"/>
    <property type="match status" value="1"/>
</dbReference>
<dbReference type="Gene3D" id="1.25.40.10">
    <property type="entry name" value="Tetratricopeptide repeat domain"/>
    <property type="match status" value="3"/>
</dbReference>
<dbReference type="InterPro" id="IPR039340">
    <property type="entry name" value="Tfc4/TFIIIC-102/Sfc4"/>
</dbReference>
<dbReference type="InterPro" id="IPR011990">
    <property type="entry name" value="TPR-like_helical_dom_sf"/>
</dbReference>
<dbReference type="InterPro" id="IPR019734">
    <property type="entry name" value="TPR_rpt"/>
</dbReference>
<dbReference type="PANTHER" id="PTHR23082:SF0">
    <property type="entry name" value="GENERAL TRANSCRIPTION FACTOR 3C POLYPEPTIDE 3"/>
    <property type="match status" value="1"/>
</dbReference>
<dbReference type="PANTHER" id="PTHR23082">
    <property type="entry name" value="TRANSCRIPTION INITIATION FACTOR IIIC TFIIIC , POLYPEPTIDE 3-RELATED"/>
    <property type="match status" value="1"/>
</dbReference>
<dbReference type="Pfam" id="PF13181">
    <property type="entry name" value="TPR_8"/>
    <property type="match status" value="3"/>
</dbReference>
<dbReference type="SMART" id="SM00028">
    <property type="entry name" value="TPR"/>
    <property type="match status" value="6"/>
</dbReference>
<dbReference type="SUPFAM" id="SSF48452">
    <property type="entry name" value="TPR-like"/>
    <property type="match status" value="3"/>
</dbReference>
<dbReference type="PROSITE" id="PS50005">
    <property type="entry name" value="TPR"/>
    <property type="match status" value="6"/>
</dbReference>
<dbReference type="PROSITE" id="PS50293">
    <property type="entry name" value="TPR_REGION"/>
    <property type="match status" value="3"/>
</dbReference>
<sequence>MSGFSPELIDYLEGKISFEEFERRREERKTREKKSLQEKGKLSAEENPDDSEVPSSSGINSTKSQDKDVNEGETSDGVRKSVHKVFASMLGENEDDEEEEEEEEEEEEEEETPEQPTAGDVFVLEMVLNRETKKMMKEKRPRSKLPRALRGLMGEANIRFARGEREEAILMCMEIIRQAPLAYEPFSTLAMIYEDQGDMEKSLQFELIAAHLNPSDTEEWVRLAEMSLEQDNIKQAIFCYTKALKYEPTNVRYLWERSSLYEQMGDHKMAMDGYRRILNLLSPSDGERFMQLARDMAKSYYEANDVTSAINIIDEAFSKHQGLVSMEDVNIAAELYISNKQYDKALEIITDFSGIVLEKKTSEEGTSEENKAPENVTCTIPDGVPIDITVKLMVCLVHLNILEPLNPLLTTLVEQNPEDMGDLYLDVAEAFLDVGEYNSALPLLSALVCSERYNLAVVWLRHAECLKALGYMERAAESYGKVVDLAPLHLDARISLSTLQQQLGQPEKALEALEPMYDPDTLAQDANAAQQELKLLLHRSTLLFSQGKMYGYVDTLLTMLAMLLKVAMNRAQVCLISSSKSGERHLYLIKVSRDKISDSNDQESANCDAKAIFAVLTSVLTKDDWWNLLLKAIYSLCDLSRFQEAELLVDSSLEYYSFYDDRQKRKELEYFGLSAAILDKNFRKAYNYIRIMVMENVNKPQLWNIFNQVTMHSQDVRHHRFCLRLMLKNPENHALCVLNGHNAFVSGSFKHALGQYVQAFRTHPDEPLYSFCIGLTFIHMASQKYVLRRHALIVQGFSFLNRYLSLRGPCQESFYNLGRGLHQLGLIHLAIHYYQKALELPPLVVEGIELDQLDLRRDIAYNLSLIYQSSGNTGMAQTLLYTYCSI</sequence>
<name>TF3C3_HUMAN</name>
<reference key="1">
    <citation type="journal article" date="1999" name="Mol. Cell. Biol.">
        <title>Cloning and characterization of two evolutionarily conserved subunits (TFIIIC102 and TFIIIC63) of human TFIIIC and their involvement in functional interactions with TFIIIB and RNA polymerase III.</title>
        <authorList>
            <person name="Hsieh Y.-J."/>
            <person name="Wang Z."/>
            <person name="Kovelman R."/>
            <person name="Roeder R.G."/>
        </authorList>
    </citation>
    <scope>NUCLEOTIDE SEQUENCE [MRNA] (ISOFORM 1)</scope>
    <scope>INTERACTION WITH BRF1 AND TBP</scope>
    <scope>IDENTIFICATION OF SUBUNITS OF TFIIIC2 COMPLEX</scope>
</reference>
<reference key="2">
    <citation type="submission" date="2002-01" db="EMBL/GenBank/DDBJ databases">
        <title>Identification of a short isoform of hTFIIIC102 subunit.</title>
        <authorList>
            <person name="Hegde R."/>
            <person name="Alnemri E."/>
        </authorList>
    </citation>
    <scope>NUCLEOTIDE SEQUENCE [MRNA] (ISOFORM 2)</scope>
</reference>
<reference key="3">
    <citation type="journal article" date="2004" name="Nat. Genet.">
        <title>Complete sequencing and characterization of 21,243 full-length human cDNAs.</title>
        <authorList>
            <person name="Ota T."/>
            <person name="Suzuki Y."/>
            <person name="Nishikawa T."/>
            <person name="Otsuki T."/>
            <person name="Sugiyama T."/>
            <person name="Irie R."/>
            <person name="Wakamatsu A."/>
            <person name="Hayashi K."/>
            <person name="Sato H."/>
            <person name="Nagai K."/>
            <person name="Kimura K."/>
            <person name="Makita H."/>
            <person name="Sekine M."/>
            <person name="Obayashi M."/>
            <person name="Nishi T."/>
            <person name="Shibahara T."/>
            <person name="Tanaka T."/>
            <person name="Ishii S."/>
            <person name="Yamamoto J."/>
            <person name="Saito K."/>
            <person name="Kawai Y."/>
            <person name="Isono Y."/>
            <person name="Nakamura Y."/>
            <person name="Nagahari K."/>
            <person name="Murakami K."/>
            <person name="Yasuda T."/>
            <person name="Iwayanagi T."/>
            <person name="Wagatsuma M."/>
            <person name="Shiratori A."/>
            <person name="Sudo H."/>
            <person name="Hosoiri T."/>
            <person name="Kaku Y."/>
            <person name="Kodaira H."/>
            <person name="Kondo H."/>
            <person name="Sugawara M."/>
            <person name="Takahashi M."/>
            <person name="Kanda K."/>
            <person name="Yokoi T."/>
            <person name="Furuya T."/>
            <person name="Kikkawa E."/>
            <person name="Omura Y."/>
            <person name="Abe K."/>
            <person name="Kamihara K."/>
            <person name="Katsuta N."/>
            <person name="Sato K."/>
            <person name="Tanikawa M."/>
            <person name="Yamazaki M."/>
            <person name="Ninomiya K."/>
            <person name="Ishibashi T."/>
            <person name="Yamashita H."/>
            <person name="Murakawa K."/>
            <person name="Fujimori K."/>
            <person name="Tanai H."/>
            <person name="Kimata M."/>
            <person name="Watanabe M."/>
            <person name="Hiraoka S."/>
            <person name="Chiba Y."/>
            <person name="Ishida S."/>
            <person name="Ono Y."/>
            <person name="Takiguchi S."/>
            <person name="Watanabe S."/>
            <person name="Yosida M."/>
            <person name="Hotuta T."/>
            <person name="Kusano J."/>
            <person name="Kanehori K."/>
            <person name="Takahashi-Fujii A."/>
            <person name="Hara H."/>
            <person name="Tanase T.-O."/>
            <person name="Nomura Y."/>
            <person name="Togiya S."/>
            <person name="Komai F."/>
            <person name="Hara R."/>
            <person name="Takeuchi K."/>
            <person name="Arita M."/>
            <person name="Imose N."/>
            <person name="Musashino K."/>
            <person name="Yuuki H."/>
            <person name="Oshima A."/>
            <person name="Sasaki N."/>
            <person name="Aotsuka S."/>
            <person name="Yoshikawa Y."/>
            <person name="Matsunawa H."/>
            <person name="Ichihara T."/>
            <person name="Shiohata N."/>
            <person name="Sano S."/>
            <person name="Moriya S."/>
            <person name="Momiyama H."/>
            <person name="Satoh N."/>
            <person name="Takami S."/>
            <person name="Terashima Y."/>
            <person name="Suzuki O."/>
            <person name="Nakagawa S."/>
            <person name="Senoh A."/>
            <person name="Mizoguchi H."/>
            <person name="Goto Y."/>
            <person name="Shimizu F."/>
            <person name="Wakebe H."/>
            <person name="Hishigaki H."/>
            <person name="Watanabe T."/>
            <person name="Sugiyama A."/>
            <person name="Takemoto M."/>
            <person name="Kawakami B."/>
            <person name="Yamazaki M."/>
            <person name="Watanabe K."/>
            <person name="Kumagai A."/>
            <person name="Itakura S."/>
            <person name="Fukuzumi Y."/>
            <person name="Fujimori Y."/>
            <person name="Komiyama M."/>
            <person name="Tashiro H."/>
            <person name="Tanigami A."/>
            <person name="Fujiwara T."/>
            <person name="Ono T."/>
            <person name="Yamada K."/>
            <person name="Fujii Y."/>
            <person name="Ozaki K."/>
            <person name="Hirao M."/>
            <person name="Ohmori Y."/>
            <person name="Kawabata A."/>
            <person name="Hikiji T."/>
            <person name="Kobatake N."/>
            <person name="Inagaki H."/>
            <person name="Ikema Y."/>
            <person name="Okamoto S."/>
            <person name="Okitani R."/>
            <person name="Kawakami T."/>
            <person name="Noguchi S."/>
            <person name="Itoh T."/>
            <person name="Shigeta K."/>
            <person name="Senba T."/>
            <person name="Matsumura K."/>
            <person name="Nakajima Y."/>
            <person name="Mizuno T."/>
            <person name="Morinaga M."/>
            <person name="Sasaki M."/>
            <person name="Togashi T."/>
            <person name="Oyama M."/>
            <person name="Hata H."/>
            <person name="Watanabe M."/>
            <person name="Komatsu T."/>
            <person name="Mizushima-Sugano J."/>
            <person name="Satoh T."/>
            <person name="Shirai Y."/>
            <person name="Takahashi Y."/>
            <person name="Nakagawa K."/>
            <person name="Okumura K."/>
            <person name="Nagase T."/>
            <person name="Nomura N."/>
            <person name="Kikuchi H."/>
            <person name="Masuho Y."/>
            <person name="Yamashita R."/>
            <person name="Nakai K."/>
            <person name="Yada T."/>
            <person name="Nakamura Y."/>
            <person name="Ohara O."/>
            <person name="Isogai T."/>
            <person name="Sugano S."/>
        </authorList>
    </citation>
    <scope>NUCLEOTIDE SEQUENCE [LARGE SCALE MRNA] (ISOFORM 1)</scope>
    <source>
        <tissue>Hepatoma</tissue>
        <tissue>Placenta</tissue>
    </source>
</reference>
<reference key="4">
    <citation type="journal article" date="2005" name="Nature">
        <title>Generation and annotation of the DNA sequences of human chromosomes 2 and 4.</title>
        <authorList>
            <person name="Hillier L.W."/>
            <person name="Graves T.A."/>
            <person name="Fulton R.S."/>
            <person name="Fulton L.A."/>
            <person name="Pepin K.H."/>
            <person name="Minx P."/>
            <person name="Wagner-McPherson C."/>
            <person name="Layman D."/>
            <person name="Wylie K."/>
            <person name="Sekhon M."/>
            <person name="Becker M.C."/>
            <person name="Fewell G.A."/>
            <person name="Delehaunty K.D."/>
            <person name="Miner T.L."/>
            <person name="Nash W.E."/>
            <person name="Kremitzki C."/>
            <person name="Oddy L."/>
            <person name="Du H."/>
            <person name="Sun H."/>
            <person name="Bradshaw-Cordum H."/>
            <person name="Ali J."/>
            <person name="Carter J."/>
            <person name="Cordes M."/>
            <person name="Harris A."/>
            <person name="Isak A."/>
            <person name="van Brunt A."/>
            <person name="Nguyen C."/>
            <person name="Du F."/>
            <person name="Courtney L."/>
            <person name="Kalicki J."/>
            <person name="Ozersky P."/>
            <person name="Abbott S."/>
            <person name="Armstrong J."/>
            <person name="Belter E.A."/>
            <person name="Caruso L."/>
            <person name="Cedroni M."/>
            <person name="Cotton M."/>
            <person name="Davidson T."/>
            <person name="Desai A."/>
            <person name="Elliott G."/>
            <person name="Erb T."/>
            <person name="Fronick C."/>
            <person name="Gaige T."/>
            <person name="Haakenson W."/>
            <person name="Haglund K."/>
            <person name="Holmes A."/>
            <person name="Harkins R."/>
            <person name="Kim K."/>
            <person name="Kruchowski S.S."/>
            <person name="Strong C.M."/>
            <person name="Grewal N."/>
            <person name="Goyea E."/>
            <person name="Hou S."/>
            <person name="Levy A."/>
            <person name="Martinka S."/>
            <person name="Mead K."/>
            <person name="McLellan M.D."/>
            <person name="Meyer R."/>
            <person name="Randall-Maher J."/>
            <person name="Tomlinson C."/>
            <person name="Dauphin-Kohlberg S."/>
            <person name="Kozlowicz-Reilly A."/>
            <person name="Shah N."/>
            <person name="Swearengen-Shahid S."/>
            <person name="Snider J."/>
            <person name="Strong J.T."/>
            <person name="Thompson J."/>
            <person name="Yoakum M."/>
            <person name="Leonard S."/>
            <person name="Pearman C."/>
            <person name="Trani L."/>
            <person name="Radionenko M."/>
            <person name="Waligorski J.E."/>
            <person name="Wang C."/>
            <person name="Rock S.M."/>
            <person name="Tin-Wollam A.-M."/>
            <person name="Maupin R."/>
            <person name="Latreille P."/>
            <person name="Wendl M.C."/>
            <person name="Yang S.-P."/>
            <person name="Pohl C."/>
            <person name="Wallis J.W."/>
            <person name="Spieth J."/>
            <person name="Bieri T.A."/>
            <person name="Berkowicz N."/>
            <person name="Nelson J.O."/>
            <person name="Osborne J."/>
            <person name="Ding L."/>
            <person name="Meyer R."/>
            <person name="Sabo A."/>
            <person name="Shotland Y."/>
            <person name="Sinha P."/>
            <person name="Wohldmann P.E."/>
            <person name="Cook L.L."/>
            <person name="Hickenbotham M.T."/>
            <person name="Eldred J."/>
            <person name="Williams D."/>
            <person name="Jones T.A."/>
            <person name="She X."/>
            <person name="Ciccarelli F.D."/>
            <person name="Izaurralde E."/>
            <person name="Taylor J."/>
            <person name="Schmutz J."/>
            <person name="Myers R.M."/>
            <person name="Cox D.R."/>
            <person name="Huang X."/>
            <person name="McPherson J.D."/>
            <person name="Mardis E.R."/>
            <person name="Clifton S.W."/>
            <person name="Warren W.C."/>
            <person name="Chinwalla A.T."/>
            <person name="Eddy S.R."/>
            <person name="Marra M.A."/>
            <person name="Ovcharenko I."/>
            <person name="Furey T.S."/>
            <person name="Miller W."/>
            <person name="Eichler E.E."/>
            <person name="Bork P."/>
            <person name="Suyama M."/>
            <person name="Torrents D."/>
            <person name="Waterston R.H."/>
            <person name="Wilson R.K."/>
        </authorList>
    </citation>
    <scope>NUCLEOTIDE SEQUENCE [LARGE SCALE GENOMIC DNA]</scope>
</reference>
<reference key="5">
    <citation type="submission" date="2005-07" db="EMBL/GenBank/DDBJ databases">
        <authorList>
            <person name="Mural R.J."/>
            <person name="Istrail S."/>
            <person name="Sutton G.G."/>
            <person name="Florea L."/>
            <person name="Halpern A.L."/>
            <person name="Mobarry C.M."/>
            <person name="Lippert R."/>
            <person name="Walenz B."/>
            <person name="Shatkay H."/>
            <person name="Dew I."/>
            <person name="Miller J.R."/>
            <person name="Flanigan M.J."/>
            <person name="Edwards N.J."/>
            <person name="Bolanos R."/>
            <person name="Fasulo D."/>
            <person name="Halldorsson B.V."/>
            <person name="Hannenhalli S."/>
            <person name="Turner R."/>
            <person name="Yooseph S."/>
            <person name="Lu F."/>
            <person name="Nusskern D.R."/>
            <person name="Shue B.C."/>
            <person name="Zheng X.H."/>
            <person name="Zhong F."/>
            <person name="Delcher A.L."/>
            <person name="Huson D.H."/>
            <person name="Kravitz S.A."/>
            <person name="Mouchard L."/>
            <person name="Reinert K."/>
            <person name="Remington K.A."/>
            <person name="Clark A.G."/>
            <person name="Waterman M.S."/>
            <person name="Eichler E.E."/>
            <person name="Adams M.D."/>
            <person name="Hunkapiller M.W."/>
            <person name="Myers E.W."/>
            <person name="Venter J.C."/>
        </authorList>
    </citation>
    <scope>NUCLEOTIDE SEQUENCE [LARGE SCALE GENOMIC DNA]</scope>
</reference>
<reference key="6">
    <citation type="journal article" date="2004" name="Genome Res.">
        <title>The status, quality, and expansion of the NIH full-length cDNA project: the Mammalian Gene Collection (MGC).</title>
        <authorList>
            <consortium name="The MGC Project Team"/>
        </authorList>
    </citation>
    <scope>NUCLEOTIDE SEQUENCE [LARGE SCALE MRNA] (ISOFORM 1)</scope>
    <scope>VARIANT SER-70</scope>
    <source>
        <tissue>Bone marrow</tissue>
        <tissue>Lymph</tissue>
    </source>
</reference>
<reference key="7">
    <citation type="journal article" date="2007" name="BMC Genomics">
        <title>The full-ORF clone resource of the German cDNA consortium.</title>
        <authorList>
            <person name="Bechtel S."/>
            <person name="Rosenfelder H."/>
            <person name="Duda A."/>
            <person name="Schmidt C.P."/>
            <person name="Ernst U."/>
            <person name="Wellenreuther R."/>
            <person name="Mehrle A."/>
            <person name="Schuster C."/>
            <person name="Bahr A."/>
            <person name="Bloecker H."/>
            <person name="Heubner D."/>
            <person name="Hoerlein A."/>
            <person name="Michel G."/>
            <person name="Wedler H."/>
            <person name="Koehrer K."/>
            <person name="Ottenwaelder B."/>
            <person name="Poustka A."/>
            <person name="Wiemann S."/>
            <person name="Schupp I."/>
        </authorList>
    </citation>
    <scope>NUCLEOTIDE SEQUENCE [LARGE SCALE MRNA] OF 166-886 (ISOFORM 1)</scope>
    <source>
        <tissue>Amygdala</tissue>
    </source>
</reference>
<reference key="8">
    <citation type="journal article" date="2008" name="Proc. Natl. Acad. Sci. U.S.A.">
        <title>A quantitative atlas of mitotic phosphorylation.</title>
        <authorList>
            <person name="Dephoure N."/>
            <person name="Zhou C."/>
            <person name="Villen J."/>
            <person name="Beausoleil S.A."/>
            <person name="Bakalarski C.E."/>
            <person name="Elledge S.J."/>
            <person name="Gygi S.P."/>
        </authorList>
    </citation>
    <scope>PHOSPHORYLATION [LARGE SCALE ANALYSIS] AT SER-43</scope>
    <scope>IDENTIFICATION BY MASS SPECTROMETRY [LARGE SCALE ANALYSIS]</scope>
    <source>
        <tissue>Cervix carcinoma</tissue>
    </source>
</reference>
<reference key="9">
    <citation type="journal article" date="2009" name="Anal. Chem.">
        <title>Lys-N and trypsin cover complementary parts of the phosphoproteome in a refined SCX-based approach.</title>
        <authorList>
            <person name="Gauci S."/>
            <person name="Helbig A.O."/>
            <person name="Slijper M."/>
            <person name="Krijgsveld J."/>
            <person name="Heck A.J."/>
            <person name="Mohammed S."/>
        </authorList>
    </citation>
    <scope>IDENTIFICATION BY MASS SPECTROMETRY [LARGE SCALE ANALYSIS]</scope>
</reference>
<reference key="10">
    <citation type="journal article" date="2009" name="Sci. Signal.">
        <title>Quantitative phosphoproteomic analysis of T cell receptor signaling reveals system-wide modulation of protein-protein interactions.</title>
        <authorList>
            <person name="Mayya V."/>
            <person name="Lundgren D.H."/>
            <person name="Hwang S.-I."/>
            <person name="Rezaul K."/>
            <person name="Wu L."/>
            <person name="Eng J.K."/>
            <person name="Rodionov V."/>
            <person name="Han D.K."/>
        </authorList>
    </citation>
    <scope>PHOSPHORYLATION [LARGE SCALE ANALYSIS] AT SER-43</scope>
    <scope>IDENTIFICATION BY MASS SPECTROMETRY [LARGE SCALE ANALYSIS]</scope>
    <source>
        <tissue>Leukemic T-cell</tissue>
    </source>
</reference>
<reference key="11">
    <citation type="journal article" date="2011" name="BMC Syst. Biol.">
        <title>Initial characterization of the human central proteome.</title>
        <authorList>
            <person name="Burkard T.R."/>
            <person name="Planyavsky M."/>
            <person name="Kaupe I."/>
            <person name="Breitwieser F.P."/>
            <person name="Buerckstuemmer T."/>
            <person name="Bennett K.L."/>
            <person name="Superti-Furga G."/>
            <person name="Colinge J."/>
        </authorList>
    </citation>
    <scope>IDENTIFICATION BY MASS SPECTROMETRY [LARGE SCALE ANALYSIS]</scope>
</reference>
<reference key="12">
    <citation type="journal article" date="2011" name="Sci. Signal.">
        <title>System-wide temporal characterization of the proteome and phosphoproteome of human embryonic stem cell differentiation.</title>
        <authorList>
            <person name="Rigbolt K.T."/>
            <person name="Prokhorova T.A."/>
            <person name="Akimov V."/>
            <person name="Henningsen J."/>
            <person name="Johansen P.T."/>
            <person name="Kratchmarova I."/>
            <person name="Kassem M."/>
            <person name="Mann M."/>
            <person name="Olsen J.V."/>
            <person name="Blagoev B."/>
        </authorList>
    </citation>
    <scope>PHOSPHORYLATION [LARGE SCALE ANALYSIS] AT SER-43</scope>
    <scope>IDENTIFICATION BY MASS SPECTROMETRY [LARGE SCALE ANALYSIS]</scope>
</reference>
<reference key="13">
    <citation type="journal article" date="2012" name="Mol. Cell. Proteomics">
        <title>Comparative large-scale characterisation of plant vs. mammal proteins reveals similar and idiosyncratic N-alpha acetylation features.</title>
        <authorList>
            <person name="Bienvenut W.V."/>
            <person name="Sumpton D."/>
            <person name="Martinez A."/>
            <person name="Lilla S."/>
            <person name="Espagne C."/>
            <person name="Meinnel T."/>
            <person name="Giglione C."/>
        </authorList>
    </citation>
    <scope>ACETYLATION [LARGE SCALE ANALYSIS] AT SER-2</scope>
    <scope>CLEAVAGE OF INITIATOR METHIONINE [LARGE SCALE ANALYSIS]</scope>
    <scope>IDENTIFICATION BY MASS SPECTROMETRY [LARGE SCALE ANALYSIS]</scope>
</reference>
<reference key="14">
    <citation type="journal article" date="2013" name="J. Proteome Res.">
        <title>Toward a comprehensive characterization of a human cancer cell phosphoproteome.</title>
        <authorList>
            <person name="Zhou H."/>
            <person name="Di Palma S."/>
            <person name="Preisinger C."/>
            <person name="Peng M."/>
            <person name="Polat A.N."/>
            <person name="Heck A.J."/>
            <person name="Mohammed S."/>
        </authorList>
    </citation>
    <scope>PHOSPHORYLATION [LARGE SCALE ANALYSIS] AT SER-43 AND SER-282</scope>
    <scope>IDENTIFICATION BY MASS SPECTROMETRY [LARGE SCALE ANALYSIS]</scope>
    <source>
        <tissue>Cervix carcinoma</tissue>
        <tissue>Erythroleukemia</tissue>
    </source>
</reference>
<protein>
    <recommendedName>
        <fullName>General transcription factor 3C polypeptide 3</fullName>
    </recommendedName>
    <alternativeName>
        <fullName>Transcription factor IIIC 102 kDa subunit</fullName>
        <shortName>TFIIIC 102 kDa subunit</shortName>
        <shortName>TFIIIC102</shortName>
    </alternativeName>
    <alternativeName>
        <fullName>Transcription factor IIIC subunit gamma</fullName>
        <shortName>TF3C-gamma</shortName>
    </alternativeName>
</protein>
<organism>
    <name type="scientific">Homo sapiens</name>
    <name type="common">Human</name>
    <dbReference type="NCBI Taxonomy" id="9606"/>
    <lineage>
        <taxon>Eukaryota</taxon>
        <taxon>Metazoa</taxon>
        <taxon>Chordata</taxon>
        <taxon>Craniata</taxon>
        <taxon>Vertebrata</taxon>
        <taxon>Euteleostomi</taxon>
        <taxon>Mammalia</taxon>
        <taxon>Eutheria</taxon>
        <taxon>Euarchontoglires</taxon>
        <taxon>Primates</taxon>
        <taxon>Haplorrhini</taxon>
        <taxon>Catarrhini</taxon>
        <taxon>Hominidae</taxon>
        <taxon>Homo</taxon>
    </lineage>
</organism>
<gene>
    <name type="primary">GTF3C3</name>
</gene>
<keyword id="KW-0002">3D-structure</keyword>
<keyword id="KW-0007">Acetylation</keyword>
<keyword id="KW-0025">Alternative splicing</keyword>
<keyword id="KW-0238">DNA-binding</keyword>
<keyword id="KW-0539">Nucleus</keyword>
<keyword id="KW-0597">Phosphoprotein</keyword>
<keyword id="KW-1267">Proteomics identification</keyword>
<keyword id="KW-1185">Reference proteome</keyword>
<keyword id="KW-0677">Repeat</keyword>
<keyword id="KW-0802">TPR repeat</keyword>
<keyword id="KW-0804">Transcription</keyword>
<comment type="function">
    <text>Involved in RNA polymerase III-mediated transcription. Integral, tightly associated component of the DNA-binding TFIIIC2 subcomplex that directly binds tRNA and virus-associated RNA promoters.</text>
</comment>
<comment type="subunit">
    <text evidence="2">Part of the TFIIIC subcomplex TFIIIC2, consisting of six subunits, GTF3C1, GTF3C2, GTF3C3, GTF3C4, GTF3C5 and GTF3C6. Interacts with BRF1 and TBP.</text>
</comment>
<comment type="interaction">
    <interactant intactId="EBI-1054873">
        <id>Q9Y5Q9</id>
    </interactant>
    <interactant intactId="EBI-2556915">
        <id>P13928</id>
        <label>ANXA8</label>
    </interactant>
    <organismsDiffer>false</organismsDiffer>
    <experiments>3</experiments>
</comment>
<comment type="interaction">
    <interactant intactId="EBI-1054873">
        <id>Q9Y5Q9</id>
    </interactant>
    <interactant intactId="EBI-77613">
        <id>P05067</id>
        <label>APP</label>
    </interactant>
    <organismsDiffer>false</organismsDiffer>
    <experiments>3</experiments>
</comment>
<comment type="interaction">
    <interactant intactId="EBI-1054873">
        <id>Q9Y5Q9</id>
    </interactant>
    <interactant intactId="EBI-10254793">
        <id>Q6XD76</id>
        <label>ASCL4</label>
    </interactant>
    <organismsDiffer>false</organismsDiffer>
    <experiments>3</experiments>
</comment>
<comment type="interaction">
    <interactant intactId="EBI-1054873">
        <id>Q9Y5Q9</id>
    </interactant>
    <interactant intactId="EBI-10693257">
        <id>Q9H7T9</id>
        <label>AUNIP</label>
    </interactant>
    <organismsDiffer>false</organismsDiffer>
    <experiments>3</experiments>
</comment>
<comment type="interaction">
    <interactant intactId="EBI-1054873">
        <id>Q9Y5Q9</id>
    </interactant>
    <interactant intactId="EBI-10988864">
        <id>P46379-2</id>
        <label>BAG6</label>
    </interactant>
    <organismsDiffer>false</organismsDiffer>
    <experiments>3</experiments>
</comment>
<comment type="interaction">
    <interactant intactId="EBI-1054873">
        <id>Q9Y5Q9</id>
    </interactant>
    <interactant intactId="EBI-742750">
        <id>Q8TBE0</id>
        <label>BAHD1</label>
    </interactant>
    <organismsDiffer>false</organismsDiffer>
    <experiments>3</experiments>
</comment>
<comment type="interaction">
    <interactant intactId="EBI-1054873">
        <id>Q9Y5Q9</id>
    </interactant>
    <interactant intactId="EBI-10243741">
        <id>Q5H9J7</id>
        <label>BEX5</label>
    </interactant>
    <organismsDiffer>false</organismsDiffer>
    <experiments>3</experiments>
</comment>
<comment type="interaction">
    <interactant intactId="EBI-1054873">
        <id>Q9Y5Q9</id>
    </interactant>
    <interactant intactId="EBI-751596">
        <id>Q96LL4</id>
        <label>C8orf48</label>
    </interactant>
    <organismsDiffer>false</organismsDiffer>
    <experiments>3</experiments>
</comment>
<comment type="interaction">
    <interactant intactId="EBI-1054873">
        <id>Q9Y5Q9</id>
    </interactant>
    <interactant intactId="EBI-744027">
        <id>Q13191</id>
        <label>CBLB</label>
    </interactant>
    <organismsDiffer>false</organismsDiffer>
    <experiments>3</experiments>
</comment>
<comment type="interaction">
    <interactant intactId="EBI-1054873">
        <id>Q9Y5Q9</id>
    </interactant>
    <interactant intactId="EBI-11974585">
        <id>Q14781-2</id>
        <label>CBX2</label>
    </interactant>
    <organismsDiffer>false</organismsDiffer>
    <experiments>3</experiments>
</comment>
<comment type="interaction">
    <interactant intactId="EBI-1054873">
        <id>Q9Y5Q9</id>
    </interactant>
    <interactant intactId="EBI-11953200">
        <id>Q494V2-2</id>
        <label>CFAP100</label>
    </interactant>
    <organismsDiffer>false</organismsDiffer>
    <experiments>3</experiments>
</comment>
<comment type="interaction">
    <interactant intactId="EBI-1054873">
        <id>Q9Y5Q9</id>
    </interactant>
    <interactant intactId="EBI-9087876">
        <id>P48730-2</id>
        <label>CSNK1D</label>
    </interactant>
    <organismsDiffer>false</organismsDiffer>
    <experiments>3</experiments>
</comment>
<comment type="interaction">
    <interactant intactId="EBI-1054873">
        <id>Q9Y5Q9</id>
    </interactant>
    <interactant intactId="EBI-25842815">
        <id>Q5TAQ9-2</id>
        <label>DCAF8</label>
    </interactant>
    <organismsDiffer>false</organismsDiffer>
    <experiments>3</experiments>
</comment>
<comment type="interaction">
    <interactant intactId="EBI-1054873">
        <id>Q9Y5Q9</id>
    </interactant>
    <interactant intactId="EBI-23669343">
        <id>Q92782-2</id>
        <label>DPF1</label>
    </interactant>
    <organismsDiffer>false</organismsDiffer>
    <experiments>3</experiments>
</comment>
<comment type="interaction">
    <interactant intactId="EBI-1054873">
        <id>Q9Y5Q9</id>
    </interactant>
    <interactant intactId="EBI-21529239">
        <id>Q86TI2-2</id>
        <label>DPP9</label>
    </interactant>
    <organismsDiffer>false</organismsDiffer>
    <experiments>3</experiments>
</comment>
<comment type="interaction">
    <interactant intactId="EBI-1054873">
        <id>Q9Y5Q9</id>
    </interactant>
    <interactant intactId="EBI-3893327">
        <id>Q6P1L5</id>
        <label>FAM117B</label>
    </interactant>
    <organismsDiffer>false</organismsDiffer>
    <experiments>3</experiments>
</comment>
<comment type="interaction">
    <interactant intactId="EBI-1054873">
        <id>Q9Y5Q9</id>
    </interactant>
    <interactant intactId="EBI-5461838">
        <id>Q17RN3</id>
        <label>FAM98C</label>
    </interactant>
    <organismsDiffer>false</organismsDiffer>
    <experiments>3</experiments>
</comment>
<comment type="interaction">
    <interactant intactId="EBI-1054873">
        <id>Q9Y5Q9</id>
    </interactant>
    <interactant intactId="EBI-750953">
        <id>Q96IJ6</id>
        <label>GMPPA</label>
    </interactant>
    <organismsDiffer>false</organismsDiffer>
    <experiments>3</experiments>
</comment>
<comment type="interaction">
    <interactant intactId="EBI-1054873">
        <id>Q9Y5Q9</id>
    </interactant>
    <interactant intactId="EBI-22000587">
        <id>Q9HBQ8</id>
        <label>GOLGA2P5</label>
    </interactant>
    <organismsDiffer>false</organismsDiffer>
    <experiments>3</experiments>
</comment>
<comment type="interaction">
    <interactant intactId="EBI-1054873">
        <id>Q9Y5Q9</id>
    </interactant>
    <interactant intactId="EBI-347538">
        <id>Q9Y4H4</id>
        <label>GPSM3</label>
    </interactant>
    <organismsDiffer>false</organismsDiffer>
    <experiments>3</experiments>
</comment>
<comment type="interaction">
    <interactant intactId="EBI-1054873">
        <id>Q9Y5Q9</id>
    </interactant>
    <interactant intactId="EBI-1237240">
        <id>Q9UKN8</id>
        <label>GTF3C4</label>
    </interactant>
    <organismsDiffer>false</organismsDiffer>
    <experiments>2</experiments>
</comment>
<comment type="interaction">
    <interactant intactId="EBI-1054873">
        <id>Q9Y5Q9</id>
    </interactant>
    <interactant intactId="EBI-2868501">
        <id>Q6NXT2</id>
        <label>H3-5</label>
    </interactant>
    <organismsDiffer>false</organismsDiffer>
    <experiments>3</experiments>
</comment>
<comment type="interaction">
    <interactant intactId="EBI-1054873">
        <id>Q9Y5Q9</id>
    </interactant>
    <interactant intactId="EBI-2680288">
        <id>Q9HCC6</id>
        <label>HES4</label>
    </interactant>
    <organismsDiffer>false</organismsDiffer>
    <experiments>3</experiments>
</comment>
<comment type="interaction">
    <interactant intactId="EBI-1054873">
        <id>Q9Y5Q9</id>
    </interactant>
    <interactant intactId="EBI-466029">
        <id>P42858</id>
        <label>HTT</label>
    </interactant>
    <organismsDiffer>false</organismsDiffer>
    <experiments>12</experiments>
</comment>
<comment type="interaction">
    <interactant intactId="EBI-1054873">
        <id>Q9Y5Q9</id>
    </interactant>
    <interactant intactId="EBI-2796400">
        <id>Q9UIH9</id>
        <label>KLF15</label>
    </interactant>
    <organismsDiffer>false</organismsDiffer>
    <experiments>3</experiments>
</comment>
<comment type="interaction">
    <interactant intactId="EBI-1054873">
        <id>Q9Y5Q9</id>
    </interactant>
    <interactant intactId="EBI-1052558">
        <id>Q92615</id>
        <label>LARP4B</label>
    </interactant>
    <organismsDiffer>false</organismsDiffer>
    <experiments>3</experiments>
</comment>
<comment type="interaction">
    <interactant intactId="EBI-1054873">
        <id>Q9Y5Q9</id>
    </interactant>
    <interactant intactId="EBI-9088215">
        <id>A2RU56</id>
        <label>LOC401296</label>
    </interactant>
    <organismsDiffer>false</organismsDiffer>
    <experiments>3</experiments>
</comment>
<comment type="interaction">
    <interactant intactId="EBI-1054873">
        <id>Q9Y5Q9</id>
    </interactant>
    <interactant intactId="EBI-5278370">
        <id>Q14693</id>
        <label>LPIN1</label>
    </interactant>
    <organismsDiffer>false</organismsDiffer>
    <experiments>3</experiments>
</comment>
<comment type="interaction">
    <interactant intactId="EBI-1054873">
        <id>Q9Y5Q9</id>
    </interactant>
    <interactant intactId="EBI-10694180">
        <id>Q8TD91-2</id>
        <label>MAGEC3</label>
    </interactant>
    <organismsDiffer>false</organismsDiffer>
    <experiments>3</experiments>
</comment>
<comment type="interaction">
    <interactant intactId="EBI-1054873">
        <id>Q9Y5Q9</id>
    </interactant>
    <interactant intactId="EBI-2341005">
        <id>Q9H000</id>
        <label>MKRN2</label>
    </interactant>
    <organismsDiffer>false</organismsDiffer>
    <experiments>3</experiments>
</comment>
<comment type="interaction">
    <interactant intactId="EBI-1054873">
        <id>Q9Y5Q9</id>
    </interactant>
    <interactant intactId="EBI-8475277">
        <id>Q15049</id>
        <label>MLC1</label>
    </interactant>
    <organismsDiffer>false</organismsDiffer>
    <experiments>3</experiments>
</comment>
<comment type="interaction">
    <interactant intactId="EBI-1054873">
        <id>Q9Y5Q9</id>
    </interactant>
    <interactant intactId="EBI-719403">
        <id>O95563</id>
        <label>MPC2</label>
    </interactant>
    <organismsDiffer>false</organismsDiffer>
    <experiments>3</experiments>
</comment>
<comment type="interaction">
    <interactant intactId="EBI-1054873">
        <id>Q9Y5Q9</id>
    </interactant>
    <interactant intactId="EBI-447544">
        <id>P01106</id>
        <label>MYC</label>
    </interactant>
    <organismsDiffer>false</organismsDiffer>
    <experiments>4</experiments>
</comment>
<comment type="interaction">
    <interactant intactId="EBI-1054873">
        <id>Q9Y5Q9</id>
    </interactant>
    <interactant intactId="EBI-18577082">
        <id>O15381-5</id>
        <label>NVL</label>
    </interactant>
    <organismsDiffer>false</organismsDiffer>
    <experiments>3</experiments>
</comment>
<comment type="interaction">
    <interactant intactId="EBI-1054873">
        <id>Q9Y5Q9</id>
    </interactant>
    <interactant intactId="EBI-10694433">
        <id>Q8N7B6-2</id>
        <label>PACRGL</label>
    </interactant>
    <organismsDiffer>false</organismsDiffer>
    <experiments>3</experiments>
</comment>
<comment type="interaction">
    <interactant intactId="EBI-1054873">
        <id>Q9Y5Q9</id>
    </interactant>
    <interactant intactId="EBI-10302990">
        <id>Q9BYU1</id>
        <label>PBX4</label>
    </interactant>
    <organismsDiffer>false</organismsDiffer>
    <experiments>3</experiments>
</comment>
<comment type="interaction">
    <interactant intactId="EBI-1054873">
        <id>Q9Y5Q9</id>
    </interactant>
    <interactant intactId="EBI-22113571">
        <id>Q96FM1</id>
        <label>PGAP3</label>
    </interactant>
    <organismsDiffer>false</organismsDiffer>
    <experiments>3</experiments>
</comment>
<comment type="interaction">
    <interactant intactId="EBI-1054873">
        <id>Q9Y5Q9</id>
    </interactant>
    <interactant intactId="EBI-395189">
        <id>P19388</id>
        <label>POLR2E</label>
    </interactant>
    <organismsDiffer>false</organismsDiffer>
    <experiments>3</experiments>
</comment>
<comment type="interaction">
    <interactant intactId="EBI-1054873">
        <id>Q9Y5Q9</id>
    </interactant>
    <interactant intactId="EBI-25906956">
        <id>Q13332-6</id>
        <label>PTPRS</label>
    </interactant>
    <organismsDiffer>false</organismsDiffer>
    <experiments>3</experiments>
</comment>
<comment type="interaction">
    <interactant intactId="EBI-1054873">
        <id>Q9Y5Q9</id>
    </interactant>
    <interactant intactId="EBI-746228">
        <id>Q9Y5P3</id>
        <label>RAI2</label>
    </interactant>
    <organismsDiffer>false</organismsDiffer>
    <experiments>3</experiments>
</comment>
<comment type="interaction">
    <interactant intactId="EBI-1054873">
        <id>Q9Y5Q9</id>
    </interactant>
    <interactant intactId="EBI-743938">
        <id>Q96D59</id>
        <label>RNF183</label>
    </interactant>
    <organismsDiffer>false</organismsDiffer>
    <experiments>3</experiments>
</comment>
<comment type="interaction">
    <interactant intactId="EBI-1054873">
        <id>Q9Y5Q9</id>
    </interactant>
    <interactant intactId="EBI-2340642">
        <id>Q969K3</id>
        <label>RNF34</label>
    </interactant>
    <organismsDiffer>false</organismsDiffer>
    <experiments>3</experiments>
</comment>
<comment type="interaction">
    <interactant intactId="EBI-1054873">
        <id>Q9Y5Q9</id>
    </interactant>
    <interactant intactId="EBI-366570">
        <id>Q9BUL9</id>
        <label>RPP25</label>
    </interactant>
    <organismsDiffer>false</organismsDiffer>
    <experiments>3</experiments>
</comment>
<comment type="interaction">
    <interactant intactId="EBI-1054873">
        <id>Q9Y5Q9</id>
    </interactant>
    <interactant intactId="EBI-354303">
        <id>P62701</id>
        <label>RPS4X</label>
    </interactant>
    <organismsDiffer>false</organismsDiffer>
    <experiments>3</experiments>
</comment>
<comment type="interaction">
    <interactant intactId="EBI-1054873">
        <id>Q9Y5Q9</id>
    </interactant>
    <interactant intactId="EBI-6257312">
        <id>Q9BVN2</id>
        <label>RUSC1</label>
    </interactant>
    <organismsDiffer>false</organismsDiffer>
    <experiments>3</experiments>
</comment>
<comment type="interaction">
    <interactant intactId="EBI-1054873">
        <id>Q9Y5Q9</id>
    </interactant>
    <interactant intactId="EBI-752324">
        <id>Q8N488</id>
        <label>RYBP</label>
    </interactant>
    <organismsDiffer>false</organismsDiffer>
    <experiments>3</experiments>
</comment>
<comment type="interaction">
    <interactant intactId="EBI-1054873">
        <id>Q9Y5Q9</id>
    </interactant>
    <interactant intactId="EBI-632609">
        <id>O75446</id>
        <label>SAP30</label>
    </interactant>
    <organismsDiffer>false</organismsDiffer>
    <experiments>3</experiments>
</comment>
<comment type="interaction">
    <interactant intactId="EBI-1054873">
        <id>Q9Y5Q9</id>
    </interactant>
    <interactant intactId="EBI-79819">
        <id>P60896</id>
        <label>SEM1</label>
    </interactant>
    <organismsDiffer>false</organismsDiffer>
    <experiments>3</experiments>
</comment>
<comment type="interaction">
    <interactant intactId="EBI-1054873">
        <id>Q9Y5Q9</id>
    </interactant>
    <interactant intactId="EBI-7067260">
        <id>Q8NHS9</id>
        <label>SPATA22</label>
    </interactant>
    <organismsDiffer>false</organismsDiffer>
    <experiments>3</experiments>
</comment>
<comment type="interaction">
    <interactant intactId="EBI-1054873">
        <id>Q9Y5Q9</id>
    </interactant>
    <interactant intactId="EBI-8345366">
        <id>Q8TCT7-2</id>
        <label>SPPL2B</label>
    </interactant>
    <organismsDiffer>false</organismsDiffer>
    <experiments>3</experiments>
</comment>
<comment type="interaction">
    <interactant intactId="EBI-1054873">
        <id>Q9Y5Q9</id>
    </interactant>
    <interactant intactId="EBI-717245">
        <id>Q9NRL3</id>
        <label>STRN4</label>
    </interactant>
    <organismsDiffer>false</organismsDiffer>
    <experiments>3</experiments>
</comment>
<comment type="interaction">
    <interactant intactId="EBI-1054873">
        <id>Q9Y5Q9</id>
    </interactant>
    <interactant intactId="EBI-747797">
        <id>Q9BSH4</id>
        <label>TACO1</label>
    </interactant>
    <organismsDiffer>false</organismsDiffer>
    <experiments>3</experiments>
</comment>
<comment type="interaction">
    <interactant intactId="EBI-1054873">
        <id>Q9Y5Q9</id>
    </interactant>
    <interactant intactId="EBI-861737">
        <id>O43615</id>
        <label>TIMM44</label>
    </interactant>
    <organismsDiffer>false</organismsDiffer>
    <experiments>3</experiments>
</comment>
<comment type="interaction">
    <interactant intactId="EBI-1054873">
        <id>Q9Y5Q9</id>
    </interactant>
    <interactant intactId="EBI-10696113">
        <id>O75604-3</id>
        <label>USP2</label>
    </interactant>
    <organismsDiffer>false</organismsDiffer>
    <experiments>3</experiments>
</comment>
<comment type="interaction">
    <interactant intactId="EBI-1054873">
        <id>Q9Y5Q9</id>
    </interactant>
    <interactant intactId="EBI-12157263">
        <id>P40337-2</id>
        <label>VHL</label>
    </interactant>
    <organismsDiffer>false</organismsDiffer>
    <experiments>3</experiments>
</comment>
<comment type="interaction">
    <interactant intactId="EBI-1054873">
        <id>Q9Y5Q9</id>
    </interactant>
    <interactant intactId="EBI-6427899">
        <id>P58304</id>
        <label>VSX2</label>
    </interactant>
    <organismsDiffer>false</organismsDiffer>
    <experiments>3</experiments>
</comment>
<comment type="interaction">
    <interactant intactId="EBI-1054873">
        <id>Q9Y5Q9</id>
    </interactant>
    <interactant intactId="EBI-14104088">
        <id>Q53FD0-2</id>
        <label>ZC2HC1C</label>
    </interactant>
    <organismsDiffer>false</organismsDiffer>
    <experiments>3</experiments>
</comment>
<comment type="interaction">
    <interactant intactId="EBI-1054873">
        <id>Q9Y5Q9</id>
    </interactant>
    <interactant intactId="EBI-25831733">
        <id>Q96MN9-2</id>
        <label>ZNF488</label>
    </interactant>
    <organismsDiffer>false</organismsDiffer>
    <experiments>3</experiments>
</comment>
<comment type="interaction">
    <interactant intactId="EBI-1054873">
        <id>Q9Y5Q9</id>
    </interactant>
    <interactant intactId="EBI-745520">
        <id>Q9P0T4</id>
        <label>ZNF581</label>
    </interactant>
    <organismsDiffer>false</organismsDiffer>
    <experiments>3</experiments>
</comment>
<comment type="interaction">
    <interactant intactId="EBI-1054873">
        <id>Q9Y5Q9</id>
    </interactant>
    <interactant intactId="EBI-18036029">
        <id>Q3KNS6-3</id>
        <label>ZNF829</label>
    </interactant>
    <organismsDiffer>false</organismsDiffer>
    <experiments>3</experiments>
</comment>
<comment type="interaction">
    <interactant intactId="EBI-1054873">
        <id>Q9Y5Q9</id>
    </interactant>
    <interactant intactId="EBI-12021938">
        <id>Q8NBB4-2</id>
        <label>ZSCAN1</label>
    </interactant>
    <organismsDiffer>false</organismsDiffer>
    <experiments>3</experiments>
</comment>
<comment type="interaction">
    <interactant intactId="EBI-1054873">
        <id>Q9Y5Q9</id>
    </interactant>
    <interactant intactId="EBI-10178224">
        <id>P10073</id>
        <label>ZSCAN22</label>
    </interactant>
    <organismsDiffer>false</organismsDiffer>
    <experiments>3</experiments>
</comment>
<comment type="interaction">
    <interactant intactId="EBI-1054873">
        <id>Q9Y5Q9</id>
    </interactant>
    <interactant intactId="EBI-10211777">
        <id>A0A384ME25</id>
    </interactant>
    <organismsDiffer>false</organismsDiffer>
    <experiments>3</experiments>
</comment>
<comment type="interaction">
    <interactant intactId="EBI-1054873">
        <id>Q9Y5Q9</id>
    </interactant>
    <interactant intactId="EBI-10307430">
        <id>Q9H669</id>
    </interactant>
    <organismsDiffer>false</organismsDiffer>
    <experiments>3</experiments>
</comment>
<comment type="subcellular location">
    <subcellularLocation>
        <location>Nucleus</location>
    </subcellularLocation>
</comment>
<comment type="alternative products">
    <event type="alternative splicing"/>
    <isoform>
        <id>Q9Y5Q9-1</id>
        <name>1</name>
        <sequence type="displayed"/>
    </isoform>
    <isoform>
        <id>Q9Y5Q9-2</id>
        <name>2</name>
        <name>Short</name>
        <sequence type="described" ref="VSP_010353 VSP_010354"/>
    </isoform>
</comment>
<comment type="miscellaneous">
    <molecule>Isoform 2</molecule>
    <text evidence="5">May be due to exon skipping.</text>
</comment>
<comment type="sequence caution" evidence="5">
    <conflict type="erroneous initiation">
        <sequence resource="EMBL-CDS" id="BAB15638"/>
    </conflict>
</comment>
<proteinExistence type="evidence at protein level"/>